<feature type="chain" id="PRO_0000452731" description="Highly reducing polyketide synthase pspA">
    <location>
        <begin position="1"/>
        <end position="2528"/>
    </location>
</feature>
<feature type="domain" description="Ketosynthase family 3 (KS3)" evidence="3">
    <location>
        <begin position="63"/>
        <end position="483"/>
    </location>
</feature>
<feature type="domain" description="PKS/mFAS DH" evidence="4">
    <location>
        <begin position="961"/>
        <end position="1244"/>
    </location>
</feature>
<feature type="domain" description="Carrier" evidence="2">
    <location>
        <begin position="2447"/>
        <end position="2525"/>
    </location>
</feature>
<feature type="region of interest" description="Disordered" evidence="5">
    <location>
        <begin position="1"/>
        <end position="53"/>
    </location>
</feature>
<feature type="region of interest" description="Malonyl-CoA:ACP transacylase (MAT) domain" evidence="1">
    <location>
        <begin position="590"/>
        <end position="909"/>
    </location>
</feature>
<feature type="region of interest" description="Dehydratase (DH) domain" evidence="1">
    <location>
        <begin position="961"/>
        <end position="1230"/>
    </location>
</feature>
<feature type="region of interest" description="N-terminal hotdog fold" evidence="4">
    <location>
        <begin position="961"/>
        <end position="1089"/>
    </location>
</feature>
<feature type="region of interest" description="C-terminal hotdog fold" evidence="4">
    <location>
        <begin position="1099"/>
        <end position="1244"/>
    </location>
</feature>
<feature type="region of interest" description="Methyltransferase (CMet) domain" evidence="1">
    <location>
        <begin position="1409"/>
        <end position="1587"/>
    </location>
</feature>
<feature type="region of interest" description="Enoyl reductase (ER) (ER) domain" evidence="1">
    <location>
        <begin position="1803"/>
        <end position="2119"/>
    </location>
</feature>
<feature type="region of interest" description="Ketoreductase (KR) domain" evidence="1">
    <location>
        <begin position="2143"/>
        <end position="2322"/>
    </location>
</feature>
<feature type="compositionally biased region" description="Polar residues" evidence="5">
    <location>
        <begin position="24"/>
        <end position="42"/>
    </location>
</feature>
<feature type="active site" description="For beta-ketoacyl synthase activity" evidence="3">
    <location>
        <position position="235"/>
    </location>
</feature>
<feature type="active site" description="For beta-ketoacyl synthase activity" evidence="3">
    <location>
        <position position="371"/>
    </location>
</feature>
<feature type="active site" description="For beta-ketoacyl synthase activity" evidence="3">
    <location>
        <position position="406"/>
    </location>
</feature>
<feature type="active site" description="Proton acceptor; for dehydratase activity" evidence="4">
    <location>
        <position position="993"/>
    </location>
</feature>
<feature type="active site" description="Proton donor; for dehydratase activity" evidence="4">
    <location>
        <position position="1160"/>
    </location>
</feature>
<feature type="modified residue" description="O-(pantetheine 4'-phosphoryl)serine" evidence="2">
    <location>
        <position position="2485"/>
    </location>
</feature>
<dbReference type="EC" id="2.3.1.-" evidence="6"/>
<dbReference type="SMR" id="P0DUK1"/>
<dbReference type="GO" id="GO:0004312">
    <property type="term" value="F:fatty acid synthase activity"/>
    <property type="evidence" value="ECO:0007669"/>
    <property type="project" value="TreeGrafter"/>
</dbReference>
<dbReference type="GO" id="GO:0008168">
    <property type="term" value="F:methyltransferase activity"/>
    <property type="evidence" value="ECO:0007669"/>
    <property type="project" value="UniProtKB-KW"/>
</dbReference>
<dbReference type="GO" id="GO:0016491">
    <property type="term" value="F:oxidoreductase activity"/>
    <property type="evidence" value="ECO:0007669"/>
    <property type="project" value="UniProtKB-KW"/>
</dbReference>
<dbReference type="GO" id="GO:0031177">
    <property type="term" value="F:phosphopantetheine binding"/>
    <property type="evidence" value="ECO:0007669"/>
    <property type="project" value="InterPro"/>
</dbReference>
<dbReference type="GO" id="GO:0006633">
    <property type="term" value="P:fatty acid biosynthetic process"/>
    <property type="evidence" value="ECO:0007669"/>
    <property type="project" value="TreeGrafter"/>
</dbReference>
<dbReference type="GO" id="GO:1901336">
    <property type="term" value="P:lactone biosynthetic process"/>
    <property type="evidence" value="ECO:0007669"/>
    <property type="project" value="UniProtKB-ARBA"/>
</dbReference>
<dbReference type="GO" id="GO:0032259">
    <property type="term" value="P:methylation"/>
    <property type="evidence" value="ECO:0007669"/>
    <property type="project" value="UniProtKB-KW"/>
</dbReference>
<dbReference type="GO" id="GO:0030639">
    <property type="term" value="P:polyketide biosynthetic process"/>
    <property type="evidence" value="ECO:0007669"/>
    <property type="project" value="UniProtKB-ARBA"/>
</dbReference>
<dbReference type="CDD" id="cd02440">
    <property type="entry name" value="AdoMet_MTases"/>
    <property type="match status" value="1"/>
</dbReference>
<dbReference type="CDD" id="cd05195">
    <property type="entry name" value="enoyl_red"/>
    <property type="match status" value="1"/>
</dbReference>
<dbReference type="CDD" id="cd00833">
    <property type="entry name" value="PKS"/>
    <property type="match status" value="1"/>
</dbReference>
<dbReference type="FunFam" id="3.40.50.720:FF:000209">
    <property type="entry name" value="Polyketide synthase Pks12"/>
    <property type="match status" value="1"/>
</dbReference>
<dbReference type="Gene3D" id="3.30.70.3290">
    <property type="match status" value="1"/>
</dbReference>
<dbReference type="Gene3D" id="3.40.47.10">
    <property type="match status" value="1"/>
</dbReference>
<dbReference type="Gene3D" id="1.10.1200.10">
    <property type="entry name" value="ACP-like"/>
    <property type="match status" value="1"/>
</dbReference>
<dbReference type="Gene3D" id="3.40.366.10">
    <property type="entry name" value="Malonyl-Coenzyme A Acyl Carrier Protein, domain 2"/>
    <property type="match status" value="1"/>
</dbReference>
<dbReference type="Gene3D" id="3.90.180.10">
    <property type="entry name" value="Medium-chain alcohol dehydrogenases, catalytic domain"/>
    <property type="match status" value="1"/>
</dbReference>
<dbReference type="Gene3D" id="3.40.50.720">
    <property type="entry name" value="NAD(P)-binding Rossmann-like Domain"/>
    <property type="match status" value="1"/>
</dbReference>
<dbReference type="Gene3D" id="3.10.129.110">
    <property type="entry name" value="Polyketide synthase dehydratase"/>
    <property type="match status" value="1"/>
</dbReference>
<dbReference type="Gene3D" id="3.40.50.150">
    <property type="entry name" value="Vaccinia Virus protein VP39"/>
    <property type="match status" value="1"/>
</dbReference>
<dbReference type="InterPro" id="IPR001227">
    <property type="entry name" value="Ac_transferase_dom_sf"/>
</dbReference>
<dbReference type="InterPro" id="IPR036736">
    <property type="entry name" value="ACP-like_sf"/>
</dbReference>
<dbReference type="InterPro" id="IPR014043">
    <property type="entry name" value="Acyl_transferase_dom"/>
</dbReference>
<dbReference type="InterPro" id="IPR016035">
    <property type="entry name" value="Acyl_Trfase/lysoPLipase"/>
</dbReference>
<dbReference type="InterPro" id="IPR013154">
    <property type="entry name" value="ADH-like_N"/>
</dbReference>
<dbReference type="InterPro" id="IPR011032">
    <property type="entry name" value="GroES-like_sf"/>
</dbReference>
<dbReference type="InterPro" id="IPR014031">
    <property type="entry name" value="Ketoacyl_synth_C"/>
</dbReference>
<dbReference type="InterPro" id="IPR014030">
    <property type="entry name" value="Ketoacyl_synth_N"/>
</dbReference>
<dbReference type="InterPro" id="IPR016036">
    <property type="entry name" value="Malonyl_transacylase_ACP-bd"/>
</dbReference>
<dbReference type="InterPro" id="IPR013217">
    <property type="entry name" value="Methyltransf_12"/>
</dbReference>
<dbReference type="InterPro" id="IPR036291">
    <property type="entry name" value="NAD(P)-bd_dom_sf"/>
</dbReference>
<dbReference type="InterPro" id="IPR032821">
    <property type="entry name" value="PKS_assoc"/>
</dbReference>
<dbReference type="InterPro" id="IPR020841">
    <property type="entry name" value="PKS_Beta-ketoAc_synthase_dom"/>
</dbReference>
<dbReference type="InterPro" id="IPR042104">
    <property type="entry name" value="PKS_dehydratase_sf"/>
</dbReference>
<dbReference type="InterPro" id="IPR020807">
    <property type="entry name" value="PKS_DH"/>
</dbReference>
<dbReference type="InterPro" id="IPR049551">
    <property type="entry name" value="PKS_DH_C"/>
</dbReference>
<dbReference type="InterPro" id="IPR049552">
    <property type="entry name" value="PKS_DH_N"/>
</dbReference>
<dbReference type="InterPro" id="IPR020843">
    <property type="entry name" value="PKS_ER"/>
</dbReference>
<dbReference type="InterPro" id="IPR013968">
    <property type="entry name" value="PKS_KR"/>
</dbReference>
<dbReference type="InterPro" id="IPR049900">
    <property type="entry name" value="PKS_mFAS_DH"/>
</dbReference>
<dbReference type="InterPro" id="IPR050091">
    <property type="entry name" value="PKS_NRPS_Biosynth_Enz"/>
</dbReference>
<dbReference type="InterPro" id="IPR020806">
    <property type="entry name" value="PKS_PP-bd"/>
</dbReference>
<dbReference type="InterPro" id="IPR009081">
    <property type="entry name" value="PP-bd_ACP"/>
</dbReference>
<dbReference type="InterPro" id="IPR006162">
    <property type="entry name" value="Ppantetheine_attach_site"/>
</dbReference>
<dbReference type="InterPro" id="IPR029063">
    <property type="entry name" value="SAM-dependent_MTases_sf"/>
</dbReference>
<dbReference type="InterPro" id="IPR016039">
    <property type="entry name" value="Thiolase-like"/>
</dbReference>
<dbReference type="PANTHER" id="PTHR43775">
    <property type="entry name" value="FATTY ACID SYNTHASE"/>
    <property type="match status" value="1"/>
</dbReference>
<dbReference type="PANTHER" id="PTHR43775:SF49">
    <property type="entry name" value="SYNTHASE, PUTATIVE (JCVI)-RELATED"/>
    <property type="match status" value="1"/>
</dbReference>
<dbReference type="Pfam" id="PF00698">
    <property type="entry name" value="Acyl_transf_1"/>
    <property type="match status" value="1"/>
</dbReference>
<dbReference type="Pfam" id="PF08240">
    <property type="entry name" value="ADH_N"/>
    <property type="match status" value="1"/>
</dbReference>
<dbReference type="Pfam" id="PF13602">
    <property type="entry name" value="ADH_zinc_N_2"/>
    <property type="match status" value="1"/>
</dbReference>
<dbReference type="Pfam" id="PF16197">
    <property type="entry name" value="KAsynt_C_assoc"/>
    <property type="match status" value="1"/>
</dbReference>
<dbReference type="Pfam" id="PF00109">
    <property type="entry name" value="ketoacyl-synt"/>
    <property type="match status" value="1"/>
</dbReference>
<dbReference type="Pfam" id="PF02801">
    <property type="entry name" value="Ketoacyl-synt_C"/>
    <property type="match status" value="1"/>
</dbReference>
<dbReference type="Pfam" id="PF08659">
    <property type="entry name" value="KR"/>
    <property type="match status" value="1"/>
</dbReference>
<dbReference type="Pfam" id="PF08242">
    <property type="entry name" value="Methyltransf_12"/>
    <property type="match status" value="1"/>
</dbReference>
<dbReference type="Pfam" id="PF21089">
    <property type="entry name" value="PKS_DH_N"/>
    <property type="match status" value="1"/>
</dbReference>
<dbReference type="Pfam" id="PF00550">
    <property type="entry name" value="PP-binding"/>
    <property type="match status" value="1"/>
</dbReference>
<dbReference type="Pfam" id="PF14765">
    <property type="entry name" value="PS-DH"/>
    <property type="match status" value="1"/>
</dbReference>
<dbReference type="SMART" id="SM00827">
    <property type="entry name" value="PKS_AT"/>
    <property type="match status" value="1"/>
</dbReference>
<dbReference type="SMART" id="SM00826">
    <property type="entry name" value="PKS_DH"/>
    <property type="match status" value="1"/>
</dbReference>
<dbReference type="SMART" id="SM00829">
    <property type="entry name" value="PKS_ER"/>
    <property type="match status" value="1"/>
</dbReference>
<dbReference type="SMART" id="SM00822">
    <property type="entry name" value="PKS_KR"/>
    <property type="match status" value="1"/>
</dbReference>
<dbReference type="SMART" id="SM00825">
    <property type="entry name" value="PKS_KS"/>
    <property type="match status" value="1"/>
</dbReference>
<dbReference type="SMART" id="SM00823">
    <property type="entry name" value="PKS_PP"/>
    <property type="match status" value="1"/>
</dbReference>
<dbReference type="SUPFAM" id="SSF47336">
    <property type="entry name" value="ACP-like"/>
    <property type="match status" value="1"/>
</dbReference>
<dbReference type="SUPFAM" id="SSF52151">
    <property type="entry name" value="FabD/lysophospholipase-like"/>
    <property type="match status" value="1"/>
</dbReference>
<dbReference type="SUPFAM" id="SSF50129">
    <property type="entry name" value="GroES-like"/>
    <property type="match status" value="1"/>
</dbReference>
<dbReference type="SUPFAM" id="SSF51735">
    <property type="entry name" value="NAD(P)-binding Rossmann-fold domains"/>
    <property type="match status" value="2"/>
</dbReference>
<dbReference type="SUPFAM" id="SSF55048">
    <property type="entry name" value="Probable ACP-binding domain of malonyl-CoA ACP transacylase"/>
    <property type="match status" value="1"/>
</dbReference>
<dbReference type="SUPFAM" id="SSF53335">
    <property type="entry name" value="S-adenosyl-L-methionine-dependent methyltransferases"/>
    <property type="match status" value="1"/>
</dbReference>
<dbReference type="SUPFAM" id="SSF53901">
    <property type="entry name" value="Thiolase-like"/>
    <property type="match status" value="1"/>
</dbReference>
<dbReference type="PROSITE" id="PS50075">
    <property type="entry name" value="CARRIER"/>
    <property type="match status" value="1"/>
</dbReference>
<dbReference type="PROSITE" id="PS52004">
    <property type="entry name" value="KS3_2"/>
    <property type="match status" value="1"/>
</dbReference>
<dbReference type="PROSITE" id="PS00012">
    <property type="entry name" value="PHOSPHOPANTETHEINE"/>
    <property type="match status" value="1"/>
</dbReference>
<dbReference type="PROSITE" id="PS52019">
    <property type="entry name" value="PKS_MFAS_DH"/>
    <property type="match status" value="1"/>
</dbReference>
<proteinExistence type="inferred from homology"/>
<sequence>MLAQDVEFVDLPPPEATAGAATTDNETSSFNSNPVPTPSEASSIGPPHQLPVPVPDGDQPPLVEPMAICGMAMRLPGGIRDAEGFWDLLYNKRSGRCRVPKDRYNVENWFGPGKIGHVASEYGYFLDDVDLRNADASFWSMTKQEIEAMDPQQRLSLEVTYECLQNAGQRPEELRGRKIGVYLGTFEGDWLELDGRDPQHYHMYRLTGYGDYMSANRIHYEFGFMGPSVTIRTACSSSLTGLYDACHAISAGDCDSAIVACANIIYSPRTSITMQEQGVISPSGFCKTFDANADGYARGEAVSAVYVKKLSDAIRDGDPIRSVIRSTCINAGGKASTLTAPNTAAHETLIRRGHELAGVTDFSKTAMIECHGTGTAVGDPIETAAVANVFGEHGIYIGSVKTNLGHSEGASGLASIIKMTLALEHKIIPPNINFTTPNPKIPFERCKLKVPTEPLPWPKDRAELVGVNSFGIGGSNAHVLLGSAASFGIGSVQQKIIASEQSAEVAMTELTPRLLLFSAKHQQSLERMVANHQAYFLSHPESLDDMAYSLALKREELSHRSFCVTNGEDDWVPSRTHRTSGRAPPMLIFTFTGQGAQWAQMGKALIDQVPRFRRSIEKLDQVLQALPTPPRWKLIDEIRASKKKSRLSEAELSQPCCTAIQIALVDILEHYGIHPDAVIGHSSGEIGAAYASHAISGADAIQIAFYRGLVMCSLNPAERPGGMAAVGLGAEELTPYLRPGVRVGCENSPNSTTLTGDKVSLEETMKAIKEANPDVFVRALQVDRAYHSHHMETVAPEYVELLTNQRVQAMDPSVKFFSSVTGRQVDQSKELGPLYWAKNLVSPVRFSTAMEELVQSLIGPKVFLEIGPHSALAGPIRQILQHHKSTDEYFNTLTRGSDSHKDLLKAVGEMWLQNIPVNLTAVLGEGRFLPDLPLYPWHYEEPLWCESRLSKEWRLREFPHHDILGSRVLESTDQNPSWRNILRLDVVPWIKEHEVAGEIVFPGVGYICMAGEAIRQLTGETGFTARRVHIKAALVMHQGQDVEVITQLQRIPLTNAADSKWYNFTVHSYNKGIWVKHIFGQVCAGSDREHQAPSLESLPRQLSRRGWYRKMKEMGLEYGSRFMGLTDMTAHPIERKTIATVVNDIREGESKYAVHPVSLDCLLQAIVPATFNGLTRRFQHLGIPTYMEEIYVCPPLQPEMIIEACADEQPTAALSGSIIAVSNGHVTIDIRGLQMSAIGDAADASGQDPHAAVELEWREDINLISDAAKLIHPAKDRTDLHHLLDRFASASMMDTSTRLRGVEPTRSHLTHYQKWIESTADLIKLGKYPGLQPEDEIVEVSDAERVNIIESLYLSLLETDAAATATAIYRIWKECQGIFTGETDELELLLEGEVLHSLYDFMQNSEYRVFLELLAHRKPNLRVLEIGAGTGGTTATVLPALKSLYGERMYHSYTYTDISAGFFPQAKKRFENYPGLEFATLDISQDPLSQGFEAESFDLIIACNVLHATSTLQDTLTNVRRLLHPQGRLFLQELSPATKWINYVMGVLPGWWLGEQDGRYPEPYIGIDQWDALLSQSGFSGINLVSHDGYLNNNIVARPAADTQRQKRITLLHSCEDSASVTTSISQLLSSAGFGIDLYAIENANIPTPTQQDIVSILDLDRPFFHDLHESLFENLKGLLSQLRDTDSGILWVTRASQVGCKDPRYAMVNGVARVIRTELNIDFATLELEDFEQETLALIPQVLGEFQQRISEPNINTTTEWAVVGQKPLISRYHYIQVAEELKNNAVADSSTVKKLEQSRPGLVDTLCWKSMPISHALDENDVLVQVKCVGMNFKDVLISTGVITEKSSIGRGLGYEGSGLVLQVGSAVHKLSVGDRVIMSSSGSLTTTQQLDQRLCVKMPDSMTYEEGATMSAVYCTAIHCLLDVGGLRKGQSVLIHSASGGVGIAAMYIAQMVGAEVYATVGSEEKTQSLMSTFNIPRNRIFNSRTSEFLPRIMEETNGMGVDVVLNSLSGELLHASWKCTAEFGTFVEIGRRDFVGQGLLDMQPFEPNRSFVGFDLLLFSNKRPERIESIMTRAMDYYRAGFIQPIKPMTMFDAVSIVDAIRYMQRGQHIGKIVITMPENSTELSAEPPRQELALRQDRAYLFVGGLGGLGRSIATWLVEHGARHLVFLSRSAGNVPDDDPFVQELAVLGCTTTRISGDVSKLDDVLLAIRASGKPVGGVLQSSMVLRDNSFVDMNWDEWLGAVQPKVLGTWNLHNALLSEQPEEALDFFFLFSSAGAMSGQWGQANYNAGNTFLDAFVAYRHSLGLPASTVNIGVIQDIGYVSQNPEILDSLRSTAQYLMREPELLESIELMLHRSSPAESVVDHAVGRYVTRSQIGIGMRSTVPMDAPSNRTIWRKDPRMLVYRNLEVQSGPVSSSTGSDQVLTQFLREIGSNMTMLKAPETAELLAGEIGRTLFGFLMRADTEVVDLDAPLASVGIDSLISIELRNWIRRKIGVEVTVLEIVRADSVRDLGVLAQKKLAEK</sequence>
<evidence type="ECO:0000255" key="1"/>
<evidence type="ECO:0000255" key="2">
    <source>
        <dbReference type="PROSITE-ProRule" id="PRU00258"/>
    </source>
</evidence>
<evidence type="ECO:0000255" key="3">
    <source>
        <dbReference type="PROSITE-ProRule" id="PRU01348"/>
    </source>
</evidence>
<evidence type="ECO:0000255" key="4">
    <source>
        <dbReference type="PROSITE-ProRule" id="PRU01363"/>
    </source>
</evidence>
<evidence type="ECO:0000256" key="5">
    <source>
        <dbReference type="SAM" id="MobiDB-lite"/>
    </source>
</evidence>
<evidence type="ECO:0000269" key="6">
    <source>
    </source>
</evidence>
<evidence type="ECO:0000303" key="7">
    <source>
    </source>
</evidence>
<evidence type="ECO:0000305" key="8">
    <source>
    </source>
</evidence>
<comment type="function">
    <text evidence="6">Highly reducing polyketide synthase; part of the gene cluster that mediates the biosynthesis of the alkylresorcinols called soppilines (PubMed:31086874). The biosynthesis starts with the HR-PKS pspA-catalyzed carbon chain assembly through nine chain elongation cycles, using acetyl CoA and malonyl CoA as a starter and extender units, respectively, to produce the polyketide soppiline A (PubMed:31086874). In the first round, the KR, DH, and CMeT domains work to produce 2-methyl-2-butenyl thioester (PubMed:31086874). In rounds 2 to 5, the KR, DH, and ER domains fully catalyze the reduction of the elongated beta-ketothioester, resulting in the insertion of eight methylene units (PubMed:31086874). The unusual Z,E,Z-triene motif is likely constructed during rounds 6 to 8 (PubMed:31086874). Typically, the DH domain introduces a double bond at an alpha,beta-position of an elongated polyketide chain, with the dehydration of a beta-hydroxy group (PubMed:31086874). The last extension cycle would be carried out with L-oriented beta-ketoreduction by the KR domain to produce beta-hydroxy carboxylic acid soppiline A (PubMed:31086874). The type III PKS pspB intercepts the elongated polyketide chain at round 8 from the HR-PKS pspA, followed by a tri-keto extension and decarboxylative aldol cyclization to produce 1,3,5-trisubstituted alkylresorcinol soppiline B (PubMed:31086874). Subsequently, the cytochrome P450 monooxygenase pspC catalyzes three-step oxidations at the C-4 methyl group to carboxylic acid to yield soppiline C (PubMed:31086874).</text>
</comment>
<comment type="catalytic activity">
    <reaction evidence="6">
        <text>9 malonyl-CoA + acetyl-CoA + S-adenosyl-L-methionine + 13 NADPH + 20 H(+) = soppiline A + S-adenosyl-L-homocysteine + 9 CO2 + 13 NADP(+) + 10 CoA + 7 H2O</text>
        <dbReference type="Rhea" id="RHEA:66908"/>
        <dbReference type="ChEBI" id="CHEBI:15377"/>
        <dbReference type="ChEBI" id="CHEBI:15378"/>
        <dbReference type="ChEBI" id="CHEBI:16526"/>
        <dbReference type="ChEBI" id="CHEBI:57287"/>
        <dbReference type="ChEBI" id="CHEBI:57288"/>
        <dbReference type="ChEBI" id="CHEBI:57384"/>
        <dbReference type="ChEBI" id="CHEBI:57783"/>
        <dbReference type="ChEBI" id="CHEBI:57856"/>
        <dbReference type="ChEBI" id="CHEBI:58349"/>
        <dbReference type="ChEBI" id="CHEBI:59789"/>
        <dbReference type="ChEBI" id="CHEBI:167558"/>
    </reaction>
    <physiologicalReaction direction="left-to-right" evidence="6">
        <dbReference type="Rhea" id="RHEA:66909"/>
    </physiologicalReaction>
</comment>
<comment type="pathway">
    <text evidence="6">Secondary metabolite biosynthesis.</text>
</comment>
<comment type="domain">
    <text evidence="8">Multidomain protein; including a ketosynthase (KS) that catalyzes repeated decarboxylative condensation to elongate the polyketide backbone; a malonyl-CoA:ACP transacylase (MAT) that selects and transfers the extender unit malonyl-CoA; a dehydratase (DH) domain that reduces hydroxyl groups to enoyl groups; a methyltransferase (CMeT) domain responsible for the incorporation of methyl groups; an enoylreductase (ER) domain that reduces enoyl groups to alkyl group; a ketoreductase (KR) domain that catalyzes beta-ketoreduction steps; and an acyl-carrier protein (ACP) that serves as the tether of the growing and completed polyketide via its phosphopantetheinyl arm.</text>
</comment>
<accession>P0DUK1</accession>
<name>PSPA_PENSO</name>
<organism>
    <name type="scientific">Penicillium soppii</name>
    <dbReference type="NCBI Taxonomy" id="69789"/>
    <lineage>
        <taxon>Eukaryota</taxon>
        <taxon>Fungi</taxon>
        <taxon>Dikarya</taxon>
        <taxon>Ascomycota</taxon>
        <taxon>Pezizomycotina</taxon>
        <taxon>Eurotiomycetes</taxon>
        <taxon>Eurotiomycetidae</taxon>
        <taxon>Eurotiales</taxon>
        <taxon>Aspergillaceae</taxon>
        <taxon>Penicillium</taxon>
    </lineage>
</organism>
<keyword id="KW-0012">Acyltransferase</keyword>
<keyword id="KW-0489">Methyltransferase</keyword>
<keyword id="KW-0511">Multifunctional enzyme</keyword>
<keyword id="KW-0521">NADP</keyword>
<keyword id="KW-0560">Oxidoreductase</keyword>
<keyword id="KW-0596">Phosphopantetheine</keyword>
<keyword id="KW-0597">Phosphoprotein</keyword>
<keyword id="KW-0808">Transferase</keyword>
<reference key="1">
    <citation type="journal article" date="2019" name="Org. Biomol. Chem.">
        <title>Post-genomic approach based discovery of alkylresorcinols from a cricket-associated fungus, Penicillium soppi.</title>
        <authorList>
            <person name="Kaneko A."/>
            <person name="Morishita Y."/>
            <person name="Tsukada K."/>
            <person name="Taniguchi T."/>
            <person name="Asai T."/>
        </authorList>
    </citation>
    <scope>NUCLEOTIDE SEQUENCE [GENOMIC DNA]</scope>
    <scope>DOMAIN</scope>
    <scope>FUNCTION</scope>
    <scope>PATHWAY</scope>
</reference>
<gene>
    <name evidence="7" type="primary">pspA</name>
</gene>
<protein>
    <recommendedName>
        <fullName evidence="7">Highly reducing polyketide synthase pspA</fullName>
        <shortName evidence="7">HR-PKS pspA</shortName>
        <ecNumber evidence="6">2.3.1.-</ecNumber>
    </recommendedName>
    <alternativeName>
        <fullName evidence="7">Soppiline biosynthesis cluster protein A</fullName>
    </alternativeName>
</protein>